<organism>
    <name type="scientific">Pongo abelii</name>
    <name type="common">Sumatran orangutan</name>
    <name type="synonym">Pongo pygmaeus abelii</name>
    <dbReference type="NCBI Taxonomy" id="9601"/>
    <lineage>
        <taxon>Eukaryota</taxon>
        <taxon>Metazoa</taxon>
        <taxon>Chordata</taxon>
        <taxon>Craniata</taxon>
        <taxon>Vertebrata</taxon>
        <taxon>Euteleostomi</taxon>
        <taxon>Mammalia</taxon>
        <taxon>Eutheria</taxon>
        <taxon>Euarchontoglires</taxon>
        <taxon>Primates</taxon>
        <taxon>Haplorrhini</taxon>
        <taxon>Catarrhini</taxon>
        <taxon>Hominidae</taxon>
        <taxon>Pongo</taxon>
    </lineage>
</organism>
<gene>
    <name evidence="3" type="primary">AK2</name>
</gene>
<accession>Q5REI7</accession>
<keyword id="KW-0007">Acetylation</keyword>
<keyword id="KW-0067">ATP-binding</keyword>
<keyword id="KW-1015">Disulfide bond</keyword>
<keyword id="KW-0418">Kinase</keyword>
<keyword id="KW-0496">Mitochondrion</keyword>
<keyword id="KW-0547">Nucleotide-binding</keyword>
<keyword id="KW-0597">Phosphoprotein</keyword>
<keyword id="KW-1185">Reference proteome</keyword>
<keyword id="KW-0808">Transferase</keyword>
<dbReference type="EC" id="2.7.4.3" evidence="3"/>
<dbReference type="EMBL" id="CR857541">
    <property type="protein sequence ID" value="CAH89820.1"/>
    <property type="molecule type" value="mRNA"/>
</dbReference>
<dbReference type="RefSeq" id="NP_001124843.1">
    <property type="nucleotide sequence ID" value="NM_001131371.2"/>
</dbReference>
<dbReference type="SMR" id="Q5REI7"/>
<dbReference type="FunCoup" id="Q5REI7">
    <property type="interactions" value="2020"/>
</dbReference>
<dbReference type="STRING" id="9601.ENSPPYP00000001820"/>
<dbReference type="Ensembl" id="ENSPPYT00000051061.1">
    <property type="protein sequence ID" value="ENSPPYP00000034629.1"/>
    <property type="gene ID" value="ENSPPYG00000037048.1"/>
</dbReference>
<dbReference type="GeneID" id="100171703"/>
<dbReference type="KEGG" id="pon:100171703"/>
<dbReference type="CTD" id="204"/>
<dbReference type="eggNOG" id="KOG3078">
    <property type="taxonomic scope" value="Eukaryota"/>
</dbReference>
<dbReference type="GeneTree" id="ENSGT00940000154576"/>
<dbReference type="HOGENOM" id="CLU_032354_1_0_1"/>
<dbReference type="InParanoid" id="Q5REI7"/>
<dbReference type="OMA" id="VYHEQTA"/>
<dbReference type="OrthoDB" id="439792at2759"/>
<dbReference type="TreeFam" id="TF300896"/>
<dbReference type="Proteomes" id="UP000001595">
    <property type="component" value="Chromosome 1"/>
</dbReference>
<dbReference type="GO" id="GO:0005758">
    <property type="term" value="C:mitochondrial intermembrane space"/>
    <property type="evidence" value="ECO:0007669"/>
    <property type="project" value="UniProtKB-SubCell"/>
</dbReference>
<dbReference type="GO" id="GO:0097226">
    <property type="term" value="C:sperm mitochondrial sheath"/>
    <property type="evidence" value="ECO:0007669"/>
    <property type="project" value="Ensembl"/>
</dbReference>
<dbReference type="GO" id="GO:0004017">
    <property type="term" value="F:adenylate kinase activity"/>
    <property type="evidence" value="ECO:0007669"/>
    <property type="project" value="UniProtKB-UniRule"/>
</dbReference>
<dbReference type="GO" id="GO:0005524">
    <property type="term" value="F:ATP binding"/>
    <property type="evidence" value="ECO:0007669"/>
    <property type="project" value="UniProtKB-KW"/>
</dbReference>
<dbReference type="GO" id="GO:0006172">
    <property type="term" value="P:ADP biosynthetic process"/>
    <property type="evidence" value="ECO:0007669"/>
    <property type="project" value="UniProtKB-UniRule"/>
</dbReference>
<dbReference type="GO" id="GO:0046033">
    <property type="term" value="P:AMP metabolic process"/>
    <property type="evidence" value="ECO:0007669"/>
    <property type="project" value="UniProtKB-UniRule"/>
</dbReference>
<dbReference type="GO" id="GO:0046034">
    <property type="term" value="P:ATP metabolic process"/>
    <property type="evidence" value="ECO:0007669"/>
    <property type="project" value="UniProtKB-UniRule"/>
</dbReference>
<dbReference type="CDD" id="cd01428">
    <property type="entry name" value="ADK"/>
    <property type="match status" value="1"/>
</dbReference>
<dbReference type="FunFam" id="3.40.50.300:FF:000106">
    <property type="entry name" value="Adenylate kinase mitochondrial"/>
    <property type="match status" value="1"/>
</dbReference>
<dbReference type="Gene3D" id="3.40.50.300">
    <property type="entry name" value="P-loop containing nucleotide triphosphate hydrolases"/>
    <property type="match status" value="1"/>
</dbReference>
<dbReference type="HAMAP" id="MF_00235">
    <property type="entry name" value="Adenylate_kinase_Adk"/>
    <property type="match status" value="1"/>
</dbReference>
<dbReference type="HAMAP" id="MF_03168">
    <property type="entry name" value="Adenylate_kinase_AK2"/>
    <property type="match status" value="1"/>
</dbReference>
<dbReference type="InterPro" id="IPR006259">
    <property type="entry name" value="Adenyl_kin_sub"/>
</dbReference>
<dbReference type="InterPro" id="IPR000850">
    <property type="entry name" value="Adenylat/UMP-CMP_kin"/>
</dbReference>
<dbReference type="InterPro" id="IPR033690">
    <property type="entry name" value="Adenylat_kinase_CS"/>
</dbReference>
<dbReference type="InterPro" id="IPR007862">
    <property type="entry name" value="Adenylate_kinase_lid-dom"/>
</dbReference>
<dbReference type="InterPro" id="IPR028587">
    <property type="entry name" value="AK2"/>
</dbReference>
<dbReference type="InterPro" id="IPR027417">
    <property type="entry name" value="P-loop_NTPase"/>
</dbReference>
<dbReference type="NCBIfam" id="TIGR01351">
    <property type="entry name" value="adk"/>
    <property type="match status" value="1"/>
</dbReference>
<dbReference type="NCBIfam" id="NF001381">
    <property type="entry name" value="PRK00279.1-3"/>
    <property type="match status" value="1"/>
</dbReference>
<dbReference type="NCBIfam" id="NF011100">
    <property type="entry name" value="PRK14527.1"/>
    <property type="match status" value="1"/>
</dbReference>
<dbReference type="PANTHER" id="PTHR23359">
    <property type="entry name" value="NUCLEOTIDE KINASE"/>
    <property type="match status" value="1"/>
</dbReference>
<dbReference type="Pfam" id="PF00406">
    <property type="entry name" value="ADK"/>
    <property type="match status" value="1"/>
</dbReference>
<dbReference type="Pfam" id="PF05191">
    <property type="entry name" value="ADK_lid"/>
    <property type="match status" value="1"/>
</dbReference>
<dbReference type="PRINTS" id="PR00094">
    <property type="entry name" value="ADENYLTKNASE"/>
</dbReference>
<dbReference type="SUPFAM" id="SSF52540">
    <property type="entry name" value="P-loop containing nucleoside triphosphate hydrolases"/>
    <property type="match status" value="1"/>
</dbReference>
<dbReference type="PROSITE" id="PS00113">
    <property type="entry name" value="ADENYLATE_KINASE"/>
    <property type="match status" value="1"/>
</dbReference>
<comment type="function">
    <text evidence="3">Catalyzes the reversible transfer of the terminal phosphate group between ATP and AMP. Plays an important role in cellular energy homeostasis and in adenine nucleotide metabolism. Adenylate kinase activity is critical for regulation of the phosphate utilization and the AMP de novo biosynthesis pathways. Plays a key role in hematopoiesis.</text>
</comment>
<comment type="catalytic activity">
    <reaction evidence="3">
        <text>AMP + ATP = 2 ADP</text>
        <dbReference type="Rhea" id="RHEA:12973"/>
        <dbReference type="ChEBI" id="CHEBI:30616"/>
        <dbReference type="ChEBI" id="CHEBI:456215"/>
        <dbReference type="ChEBI" id="CHEBI:456216"/>
        <dbReference type="EC" id="2.7.4.3"/>
    </reaction>
</comment>
<comment type="subunit">
    <text evidence="3">Monomer.</text>
</comment>
<comment type="subcellular location">
    <subcellularLocation>
        <location evidence="3">Mitochondrion intermembrane space</location>
    </subcellularLocation>
</comment>
<comment type="domain">
    <text evidence="3">Consists of three domains, a large central CORE domain and two small peripheral domains, NMPbind and LID, which undergo movements during catalysis. The LID domain closes over the site of phosphoryl transfer upon ATP binding. Assembling and dissambling the active center during each catalytic cycle provides an effective means to prevent ATP hydrolysis.</text>
</comment>
<comment type="similarity">
    <text evidence="3">Belongs to the adenylate kinase family. AK2 subfamily.</text>
</comment>
<evidence type="ECO:0000250" key="1">
    <source>
        <dbReference type="UniProtKB" id="P54819"/>
    </source>
</evidence>
<evidence type="ECO:0000250" key="2">
    <source>
        <dbReference type="UniProtKB" id="Q9WTP6"/>
    </source>
</evidence>
<evidence type="ECO:0000255" key="3">
    <source>
        <dbReference type="HAMAP-Rule" id="MF_03168"/>
    </source>
</evidence>
<evidence type="ECO:0000256" key="4">
    <source>
        <dbReference type="SAM" id="MobiDB-lite"/>
    </source>
</evidence>
<proteinExistence type="evidence at transcript level"/>
<sequence length="239" mass="26478">MAPSVPAAEPEYPKGIRAVLLGPPGAGKGTQAPRLAENFCVCHLATGDMLRAMVASGSELGKKLKATMDAGKLVSDEMVVELIEKNLETPLCKNGFLLDGFPRTVRQAEMLDDLMEKRKEKLDSVIEFSIPDSLLIRRITGRLIHPKSGRSYHEEFNPPKEPMKDDITGEPLIRRSDDNEKALKIRLQAYHTQTTPLIEYYRKRGIHSAIDASQTPDVVFASILAAFSKATCKDLVMFI</sequence>
<feature type="chain" id="PRO_0000158919" description="Adenylate kinase 2, mitochondrial">
    <location>
        <begin position="1"/>
        <end position="239"/>
    </location>
</feature>
<feature type="region of interest" description="NMP" evidence="3">
    <location>
        <begin position="45"/>
        <end position="74"/>
    </location>
</feature>
<feature type="region of interest" description="LID" evidence="3">
    <location>
        <begin position="141"/>
        <end position="178"/>
    </location>
</feature>
<feature type="region of interest" description="Disordered" evidence="4">
    <location>
        <begin position="150"/>
        <end position="169"/>
    </location>
</feature>
<feature type="compositionally biased region" description="Basic and acidic residues" evidence="4">
    <location>
        <begin position="151"/>
        <end position="169"/>
    </location>
</feature>
<feature type="binding site" evidence="3">
    <location>
        <begin position="25"/>
        <end position="30"/>
    </location>
    <ligand>
        <name>ATP</name>
        <dbReference type="ChEBI" id="CHEBI:30616"/>
    </ligand>
</feature>
<feature type="binding site" evidence="3">
    <location>
        <position position="46"/>
    </location>
    <ligand>
        <name>AMP</name>
        <dbReference type="ChEBI" id="CHEBI:456215"/>
    </ligand>
</feature>
<feature type="binding site" evidence="3">
    <location>
        <position position="51"/>
    </location>
    <ligand>
        <name>AMP</name>
        <dbReference type="ChEBI" id="CHEBI:456215"/>
    </ligand>
</feature>
<feature type="binding site" evidence="3">
    <location>
        <begin position="72"/>
        <end position="74"/>
    </location>
    <ligand>
        <name>AMP</name>
        <dbReference type="ChEBI" id="CHEBI:456215"/>
    </ligand>
</feature>
<feature type="binding site" evidence="3">
    <location>
        <begin position="100"/>
        <end position="103"/>
    </location>
    <ligand>
        <name>AMP</name>
        <dbReference type="ChEBI" id="CHEBI:456215"/>
    </ligand>
</feature>
<feature type="binding site" evidence="3">
    <location>
        <position position="107"/>
    </location>
    <ligand>
        <name>AMP</name>
        <dbReference type="ChEBI" id="CHEBI:456215"/>
    </ligand>
</feature>
<feature type="binding site" evidence="3">
    <location>
        <position position="142"/>
    </location>
    <ligand>
        <name>ATP</name>
        <dbReference type="ChEBI" id="CHEBI:30616"/>
    </ligand>
</feature>
<feature type="binding site" evidence="3">
    <location>
        <begin position="151"/>
        <end position="152"/>
    </location>
    <ligand>
        <name>ATP</name>
        <dbReference type="ChEBI" id="CHEBI:30616"/>
    </ligand>
</feature>
<feature type="binding site" evidence="3">
    <location>
        <position position="175"/>
    </location>
    <ligand>
        <name>AMP</name>
        <dbReference type="ChEBI" id="CHEBI:456215"/>
    </ligand>
</feature>
<feature type="binding site" evidence="3">
    <location>
        <position position="186"/>
    </location>
    <ligand>
        <name>AMP</name>
        <dbReference type="ChEBI" id="CHEBI:456215"/>
    </ligand>
</feature>
<feature type="binding site" evidence="3">
    <location>
        <position position="214"/>
    </location>
    <ligand>
        <name>ATP</name>
        <dbReference type="ChEBI" id="CHEBI:30616"/>
    </ligand>
</feature>
<feature type="modified residue" description="N-acetylmethionine" evidence="1">
    <location>
        <position position="1"/>
    </location>
</feature>
<feature type="modified residue" description="Phosphoserine" evidence="1">
    <location>
        <position position="4"/>
    </location>
</feature>
<feature type="modified residue" description="Phosphoserine" evidence="1">
    <location>
        <position position="58"/>
    </location>
</feature>
<feature type="modified residue" description="N6-succinyllysine" evidence="2">
    <location>
        <position position="62"/>
    </location>
</feature>
<feature type="modified residue" description="N6-succinyllysine" evidence="2">
    <location>
        <position position="93"/>
    </location>
</feature>
<feature type="modified residue" description="Phosphoserine" evidence="1">
    <location>
        <position position="133"/>
    </location>
</feature>
<feature type="modified residue" description="N6-acetyllysine" evidence="2">
    <location>
        <position position="181"/>
    </location>
</feature>
<feature type="modified residue" description="Phosphothreonine" evidence="1">
    <location>
        <position position="195"/>
    </location>
</feature>
<feature type="disulfide bond" evidence="3">
    <location>
        <begin position="42"/>
        <end position="92"/>
    </location>
</feature>
<name>KAD2_PONAB</name>
<protein>
    <recommendedName>
        <fullName evidence="3">Adenylate kinase 2, mitochondrial</fullName>
        <shortName evidence="3">AK 2</shortName>
        <ecNumber evidence="3">2.7.4.3</ecNumber>
    </recommendedName>
    <alternativeName>
        <fullName evidence="3">ATP-AMP transphosphorylase 2</fullName>
    </alternativeName>
    <alternativeName>
        <fullName evidence="3">ATP:AMP phosphotransferase</fullName>
    </alternativeName>
    <alternativeName>
        <fullName evidence="3">Adenylate monophosphate kinase</fullName>
    </alternativeName>
</protein>
<reference key="1">
    <citation type="submission" date="2004-11" db="EMBL/GenBank/DDBJ databases">
        <authorList>
            <consortium name="The German cDNA consortium"/>
        </authorList>
    </citation>
    <scope>NUCLEOTIDE SEQUENCE [LARGE SCALE MRNA]</scope>
    <source>
        <tissue>Brain cortex</tissue>
    </source>
</reference>